<protein>
    <recommendedName>
        <fullName evidence="1">NAD(P)H-quinone oxidoreductase subunit 4L, chloroplastic</fullName>
        <ecNumber evidence="1">7.1.1.-</ecNumber>
    </recommendedName>
    <alternativeName>
        <fullName evidence="1">NAD(P)H dehydrogenase subunit 4L</fullName>
    </alternativeName>
    <alternativeName>
        <fullName evidence="1">NADH-plastoquinone oxidoreductase subunit 4L</fullName>
    </alternativeName>
</protein>
<geneLocation type="chloroplast"/>
<sequence length="100" mass="11104">MLEHALISGAYLFSIGIYGLITSRNMVRALMCLELILNAVNVNLVTFSNYFDSRQVKGDIFSIFVTAIAAAEAAIGLAIALAIYRNRKSTRIDQFNLSKW</sequence>
<dbReference type="EC" id="7.1.1.-" evidence="1"/>
<dbReference type="EMBL" id="AP009339">
    <property type="protein sequence ID" value="BAF65010.1"/>
    <property type="molecule type" value="Genomic_DNA"/>
</dbReference>
<dbReference type="RefSeq" id="YP_001312268.1">
    <property type="nucleotide sequence ID" value="NC_009618.1"/>
</dbReference>
<dbReference type="SMR" id="A6H5P4"/>
<dbReference type="GeneID" id="5309506"/>
<dbReference type="GO" id="GO:0009535">
    <property type="term" value="C:chloroplast thylakoid membrane"/>
    <property type="evidence" value="ECO:0007669"/>
    <property type="project" value="UniProtKB-SubCell"/>
</dbReference>
<dbReference type="GO" id="GO:0030964">
    <property type="term" value="C:NADH dehydrogenase complex"/>
    <property type="evidence" value="ECO:0007669"/>
    <property type="project" value="TreeGrafter"/>
</dbReference>
<dbReference type="GO" id="GO:0016655">
    <property type="term" value="F:oxidoreductase activity, acting on NAD(P)H, quinone or similar compound as acceptor"/>
    <property type="evidence" value="ECO:0007669"/>
    <property type="project" value="UniProtKB-UniRule"/>
</dbReference>
<dbReference type="GO" id="GO:0048038">
    <property type="term" value="F:quinone binding"/>
    <property type="evidence" value="ECO:0007669"/>
    <property type="project" value="UniProtKB-KW"/>
</dbReference>
<dbReference type="GO" id="GO:0042773">
    <property type="term" value="P:ATP synthesis coupled electron transport"/>
    <property type="evidence" value="ECO:0007669"/>
    <property type="project" value="InterPro"/>
</dbReference>
<dbReference type="GO" id="GO:0019684">
    <property type="term" value="P:photosynthesis, light reaction"/>
    <property type="evidence" value="ECO:0007669"/>
    <property type="project" value="UniProtKB-UniRule"/>
</dbReference>
<dbReference type="FunFam" id="1.10.287.3510:FF:000001">
    <property type="entry name" value="NADH-quinone oxidoreductase subunit K"/>
    <property type="match status" value="1"/>
</dbReference>
<dbReference type="Gene3D" id="1.10.287.3510">
    <property type="match status" value="1"/>
</dbReference>
<dbReference type="HAMAP" id="MF_01456">
    <property type="entry name" value="NDH1_NuoK"/>
    <property type="match status" value="1"/>
</dbReference>
<dbReference type="InterPro" id="IPR001133">
    <property type="entry name" value="NADH_UbQ_OxRdtase_chain4L/K"/>
</dbReference>
<dbReference type="InterPro" id="IPR039428">
    <property type="entry name" value="NUOK/Mnh_C1-like"/>
</dbReference>
<dbReference type="NCBIfam" id="NF004320">
    <property type="entry name" value="PRK05715.1-2"/>
    <property type="match status" value="1"/>
</dbReference>
<dbReference type="NCBIfam" id="NF004322">
    <property type="entry name" value="PRK05715.1-4"/>
    <property type="match status" value="1"/>
</dbReference>
<dbReference type="NCBIfam" id="NF004323">
    <property type="entry name" value="PRK05715.1-5"/>
    <property type="match status" value="1"/>
</dbReference>
<dbReference type="PANTHER" id="PTHR11434:SF16">
    <property type="entry name" value="NADH-UBIQUINONE OXIDOREDUCTASE CHAIN 4L"/>
    <property type="match status" value="1"/>
</dbReference>
<dbReference type="PANTHER" id="PTHR11434">
    <property type="entry name" value="NADH-UBIQUINONE OXIDOREDUCTASE SUBUNIT ND4L"/>
    <property type="match status" value="1"/>
</dbReference>
<dbReference type="Pfam" id="PF00420">
    <property type="entry name" value="Oxidored_q2"/>
    <property type="match status" value="1"/>
</dbReference>
<gene>
    <name evidence="1" type="primary">ndhE</name>
</gene>
<organism>
    <name type="scientific">Cycas taitungensis</name>
    <name type="common">Prince sago</name>
    <name type="synonym">Cycas taiwaniana</name>
    <dbReference type="NCBI Taxonomy" id="54799"/>
    <lineage>
        <taxon>Eukaryota</taxon>
        <taxon>Viridiplantae</taxon>
        <taxon>Streptophyta</taxon>
        <taxon>Embryophyta</taxon>
        <taxon>Tracheophyta</taxon>
        <taxon>Spermatophyta</taxon>
        <taxon>Cycadidae</taxon>
        <taxon>Cycadales</taxon>
        <taxon>Cycadaceae</taxon>
        <taxon>Cycas</taxon>
    </lineage>
</organism>
<keyword id="KW-0150">Chloroplast</keyword>
<keyword id="KW-0472">Membrane</keyword>
<keyword id="KW-0520">NAD</keyword>
<keyword id="KW-0521">NADP</keyword>
<keyword id="KW-0934">Plastid</keyword>
<keyword id="KW-0618">Plastoquinone</keyword>
<keyword id="KW-0874">Quinone</keyword>
<keyword id="KW-0793">Thylakoid</keyword>
<keyword id="KW-1278">Translocase</keyword>
<keyword id="KW-0812">Transmembrane</keyword>
<keyword id="KW-1133">Transmembrane helix</keyword>
<keyword id="KW-0813">Transport</keyword>
<name>NU4LC_CYCTA</name>
<proteinExistence type="inferred from homology"/>
<evidence type="ECO:0000255" key="1">
    <source>
        <dbReference type="HAMAP-Rule" id="MF_01456"/>
    </source>
</evidence>
<feature type="chain" id="PRO_0000360323" description="NAD(P)H-quinone oxidoreductase subunit 4L, chloroplastic">
    <location>
        <begin position="1"/>
        <end position="100"/>
    </location>
</feature>
<feature type="transmembrane region" description="Helical" evidence="1">
    <location>
        <begin position="1"/>
        <end position="21"/>
    </location>
</feature>
<feature type="transmembrane region" description="Helical" evidence="1">
    <location>
        <begin position="29"/>
        <end position="49"/>
    </location>
</feature>
<feature type="transmembrane region" description="Helical" evidence="1">
    <location>
        <begin position="63"/>
        <end position="83"/>
    </location>
</feature>
<comment type="function">
    <text evidence="1">NDH shuttles electrons from NAD(P)H:plastoquinone, via FMN and iron-sulfur (Fe-S) centers, to quinones in the photosynthetic chain and possibly in a chloroplast respiratory chain. The immediate electron acceptor for the enzyme in this species is believed to be plastoquinone. Couples the redox reaction to proton translocation, and thus conserves the redox energy in a proton gradient.</text>
</comment>
<comment type="catalytic activity">
    <reaction evidence="1">
        <text>a plastoquinone + NADH + (n+1) H(+)(in) = a plastoquinol + NAD(+) + n H(+)(out)</text>
        <dbReference type="Rhea" id="RHEA:42608"/>
        <dbReference type="Rhea" id="RHEA-COMP:9561"/>
        <dbReference type="Rhea" id="RHEA-COMP:9562"/>
        <dbReference type="ChEBI" id="CHEBI:15378"/>
        <dbReference type="ChEBI" id="CHEBI:17757"/>
        <dbReference type="ChEBI" id="CHEBI:57540"/>
        <dbReference type="ChEBI" id="CHEBI:57945"/>
        <dbReference type="ChEBI" id="CHEBI:62192"/>
    </reaction>
</comment>
<comment type="catalytic activity">
    <reaction evidence="1">
        <text>a plastoquinone + NADPH + (n+1) H(+)(in) = a plastoquinol + NADP(+) + n H(+)(out)</text>
        <dbReference type="Rhea" id="RHEA:42612"/>
        <dbReference type="Rhea" id="RHEA-COMP:9561"/>
        <dbReference type="Rhea" id="RHEA-COMP:9562"/>
        <dbReference type="ChEBI" id="CHEBI:15378"/>
        <dbReference type="ChEBI" id="CHEBI:17757"/>
        <dbReference type="ChEBI" id="CHEBI:57783"/>
        <dbReference type="ChEBI" id="CHEBI:58349"/>
        <dbReference type="ChEBI" id="CHEBI:62192"/>
    </reaction>
</comment>
<comment type="subunit">
    <text evidence="1">NDH is composed of at least 16 different subunits, 5 of which are encoded in the nucleus.</text>
</comment>
<comment type="subcellular location">
    <subcellularLocation>
        <location evidence="1">Plastid</location>
        <location evidence="1">Chloroplast thylakoid membrane</location>
        <topology evidence="1">Multi-pass membrane protein</topology>
    </subcellularLocation>
</comment>
<comment type="similarity">
    <text evidence="1">Belongs to the complex I subunit 4L family.</text>
</comment>
<accession>A6H5P4</accession>
<reference key="1">
    <citation type="journal article" date="2007" name="Mol. Biol. Evol.">
        <title>Chloroplast genome (cpDNA) of Cycas taitungensis and 56 cp protein-coding genes of Gnetum parvifolium: insights into cpDNA evolution and phylogeny of extant seed plants.</title>
        <authorList>
            <person name="Wu C.-S."/>
            <person name="Wang Y.-N."/>
            <person name="Liu S.-M."/>
            <person name="Chaw S.-M."/>
        </authorList>
    </citation>
    <scope>NUCLEOTIDE SEQUENCE [LARGE SCALE GENOMIC DNA]</scope>
</reference>